<feature type="chain" id="PRO_0000161406" description="Protein DedA">
    <location>
        <begin position="1"/>
        <end position="219"/>
    </location>
</feature>
<feature type="topological domain" description="Cytoplasmic" evidence="5">
    <location>
        <begin position="1"/>
        <end position="24"/>
    </location>
</feature>
<feature type="transmembrane region" description="Helical" evidence="1">
    <location>
        <begin position="25"/>
        <end position="45"/>
    </location>
</feature>
<feature type="topological domain" description="Periplasmic" evidence="5">
    <location>
        <begin position="46"/>
        <end position="72"/>
    </location>
</feature>
<feature type="transmembrane region" description="Helical" evidence="1">
    <location>
        <begin position="73"/>
        <end position="93"/>
    </location>
</feature>
<feature type="topological domain" description="Cytoplasmic" evidence="5">
    <location>
        <begin position="94"/>
        <end position="160"/>
    </location>
</feature>
<feature type="transmembrane region" description="Helical" evidence="1">
    <location>
        <begin position="161"/>
        <end position="181"/>
    </location>
</feature>
<feature type="topological domain" description="Periplasmic" evidence="5">
    <location>
        <begin position="182"/>
        <end position="187"/>
    </location>
</feature>
<feature type="transmembrane region" description="Helical" evidence="1">
    <location>
        <begin position="188"/>
        <end position="208"/>
    </location>
</feature>
<feature type="topological domain" description="Cytoplasmic" evidence="2">
    <location>
        <begin position="209"/>
        <end position="219"/>
    </location>
</feature>
<keyword id="KW-0997">Cell inner membrane</keyword>
<keyword id="KW-1003">Cell membrane</keyword>
<keyword id="KW-0472">Membrane</keyword>
<keyword id="KW-1185">Reference proteome</keyword>
<keyword id="KW-0812">Transmembrane</keyword>
<keyword id="KW-1133">Transmembrane helix</keyword>
<dbReference type="EMBL" id="AH000881">
    <property type="protein sequence ID" value="AAA23964.1"/>
    <property type="molecule type" value="Genomic_DNA"/>
</dbReference>
<dbReference type="EMBL" id="U00096">
    <property type="protein sequence ID" value="AAC75377.1"/>
    <property type="molecule type" value="Genomic_DNA"/>
</dbReference>
<dbReference type="EMBL" id="AP009048">
    <property type="protein sequence ID" value="BAA16174.1"/>
    <property type="molecule type" value="Genomic_DNA"/>
</dbReference>
<dbReference type="EMBL" id="AH000888">
    <property type="protein sequence ID" value="AAA24314.1"/>
    <property type="molecule type" value="Genomic_DNA"/>
</dbReference>
<dbReference type="EMBL" id="X02743">
    <property type="protein sequence ID" value="CAA26523.1"/>
    <property type="molecule type" value="Genomic_DNA"/>
</dbReference>
<dbReference type="EMBL" id="S53037">
    <property type="protein sequence ID" value="AAB24893.1"/>
    <property type="molecule type" value="mRNA"/>
</dbReference>
<dbReference type="PIR" id="B29803">
    <property type="entry name" value="XMECAD"/>
</dbReference>
<dbReference type="RefSeq" id="NP_416820.1">
    <property type="nucleotide sequence ID" value="NC_000913.3"/>
</dbReference>
<dbReference type="RefSeq" id="WP_000364335.1">
    <property type="nucleotide sequence ID" value="NZ_LN832404.1"/>
</dbReference>
<dbReference type="BioGRID" id="4261363">
    <property type="interactions" value="9"/>
</dbReference>
<dbReference type="DIP" id="DIP-48027N"/>
<dbReference type="FunCoup" id="P0ABP6">
    <property type="interactions" value="232"/>
</dbReference>
<dbReference type="IntAct" id="P0ABP6">
    <property type="interactions" value="1"/>
</dbReference>
<dbReference type="STRING" id="511145.b2317"/>
<dbReference type="TCDB" id="9.B.27.2.3">
    <property type="family name" value="the death effector domain a (deda) family"/>
</dbReference>
<dbReference type="jPOST" id="P0ABP6"/>
<dbReference type="PaxDb" id="511145-b2317"/>
<dbReference type="EnsemblBacteria" id="AAC75377">
    <property type="protein sequence ID" value="AAC75377"/>
    <property type="gene ID" value="b2317"/>
</dbReference>
<dbReference type="GeneID" id="946798"/>
<dbReference type="KEGG" id="ecj:JW2314"/>
<dbReference type="KEGG" id="eco:b2317"/>
<dbReference type="KEGG" id="ecoc:C3026_12915"/>
<dbReference type="PATRIC" id="fig|1411691.4.peg.4417"/>
<dbReference type="EchoBASE" id="EB0212"/>
<dbReference type="eggNOG" id="COG0586">
    <property type="taxonomic scope" value="Bacteria"/>
</dbReference>
<dbReference type="HOGENOM" id="CLU_044208_6_1_6"/>
<dbReference type="InParanoid" id="P0ABP6"/>
<dbReference type="OMA" id="MAANPKY"/>
<dbReference type="OrthoDB" id="9813426at2"/>
<dbReference type="PhylomeDB" id="P0ABP6"/>
<dbReference type="BioCyc" id="EcoCyc:EG10216-MONOMER"/>
<dbReference type="PRO" id="PR:P0ABP6"/>
<dbReference type="Proteomes" id="UP000000625">
    <property type="component" value="Chromosome"/>
</dbReference>
<dbReference type="GO" id="GO:0005886">
    <property type="term" value="C:plasma membrane"/>
    <property type="evidence" value="ECO:0000314"/>
    <property type="project" value="EcoCyc"/>
</dbReference>
<dbReference type="InterPro" id="IPR032818">
    <property type="entry name" value="DedA-like"/>
</dbReference>
<dbReference type="InterPro" id="IPR032816">
    <property type="entry name" value="VTT_dom"/>
</dbReference>
<dbReference type="NCBIfam" id="NF008102">
    <property type="entry name" value="PRK10847.1"/>
    <property type="match status" value="1"/>
</dbReference>
<dbReference type="PANTHER" id="PTHR30353">
    <property type="entry name" value="INNER MEMBRANE PROTEIN DEDA-RELATED"/>
    <property type="match status" value="1"/>
</dbReference>
<dbReference type="PANTHER" id="PTHR30353:SF0">
    <property type="entry name" value="TRANSMEMBRANE PROTEIN"/>
    <property type="match status" value="1"/>
</dbReference>
<dbReference type="Pfam" id="PF09335">
    <property type="entry name" value="VTT_dom"/>
    <property type="match status" value="1"/>
</dbReference>
<protein>
    <recommendedName>
        <fullName>Protein DedA</fullName>
    </recommendedName>
    <alternativeName>
        <fullName>Protein DSG-1</fullName>
    </alternativeName>
</protein>
<sequence>MDLIYFLIDFILHIDVHLAELVAEYGVWVYAILFLILFCETGLVVTPFLPGDSLLFVAGALASLETNDLNVHMMVVLMLIAAIVGDAVNYTIGRLFGEKLFSNPNSKIFRRSYLDKTHQFYEKHGGKTIILARFVPIVRTFAPFVAGMGHMSYRHFAAYNVIGALLWVLLFTYAGYFFGTIPMVQDNLKLLIVGIIVVSILPGVIEIIRHKRAAARAAK</sequence>
<accession>P0ABP6</accession>
<accession>P09548</accession>
<reference key="1">
    <citation type="journal article" date="1987" name="J. Biol. Chem.">
        <title>The hisT-purF region of the Escherichia coli K-12 chromosome. Identification of additional genes of the hisT and purF operons.</title>
        <authorList>
            <person name="Nonet M.L."/>
            <person name="Marvel C.C."/>
            <person name="Tolan D.R."/>
        </authorList>
    </citation>
    <scope>NUCLEOTIDE SEQUENCE [GENOMIC DNA]</scope>
    <source>
        <strain>K12</strain>
    </source>
</reference>
<reference key="2">
    <citation type="journal article" date="1997" name="DNA Res.">
        <title>Construction of a contiguous 874-kb sequence of the Escherichia coli-K12 genome corresponding to 50.0-68.8 min on the linkage map and analysis of its sequence features.</title>
        <authorList>
            <person name="Yamamoto Y."/>
            <person name="Aiba H."/>
            <person name="Baba T."/>
            <person name="Hayashi K."/>
            <person name="Inada T."/>
            <person name="Isono K."/>
            <person name="Itoh T."/>
            <person name="Kimura S."/>
            <person name="Kitagawa M."/>
            <person name="Makino K."/>
            <person name="Miki T."/>
            <person name="Mitsuhashi N."/>
            <person name="Mizobuchi K."/>
            <person name="Mori H."/>
            <person name="Nakade S."/>
            <person name="Nakamura Y."/>
            <person name="Nashimoto H."/>
            <person name="Oshima T."/>
            <person name="Oyama S."/>
            <person name="Saito N."/>
            <person name="Sampei G."/>
            <person name="Satoh Y."/>
            <person name="Sivasundaram S."/>
            <person name="Tagami H."/>
            <person name="Takahashi H."/>
            <person name="Takeda J."/>
            <person name="Takemoto K."/>
            <person name="Uehara K."/>
            <person name="Wada C."/>
            <person name="Yamagata S."/>
            <person name="Horiuchi T."/>
        </authorList>
    </citation>
    <scope>NUCLEOTIDE SEQUENCE [LARGE SCALE GENOMIC DNA]</scope>
    <source>
        <strain>K12 / W3110 / ATCC 27325 / DSM 5911</strain>
    </source>
</reference>
<reference key="3">
    <citation type="journal article" date="1997" name="Science">
        <title>The complete genome sequence of Escherichia coli K-12.</title>
        <authorList>
            <person name="Blattner F.R."/>
            <person name="Plunkett G. III"/>
            <person name="Bloch C.A."/>
            <person name="Perna N.T."/>
            <person name="Burland V."/>
            <person name="Riley M."/>
            <person name="Collado-Vides J."/>
            <person name="Glasner J.D."/>
            <person name="Rode C.K."/>
            <person name="Mayhew G.F."/>
            <person name="Gregor J."/>
            <person name="Davis N.W."/>
            <person name="Kirkpatrick H.A."/>
            <person name="Goeden M.A."/>
            <person name="Rose D.J."/>
            <person name="Mau B."/>
            <person name="Shao Y."/>
        </authorList>
    </citation>
    <scope>NUCLEOTIDE SEQUENCE [LARGE SCALE GENOMIC DNA]</scope>
    <source>
        <strain>K12 / MG1655 / ATCC 47076</strain>
    </source>
</reference>
<reference key="4">
    <citation type="journal article" date="2006" name="Mol. Syst. Biol.">
        <title>Highly accurate genome sequences of Escherichia coli K-12 strains MG1655 and W3110.</title>
        <authorList>
            <person name="Hayashi K."/>
            <person name="Morooka N."/>
            <person name="Yamamoto Y."/>
            <person name="Fujita K."/>
            <person name="Isono K."/>
            <person name="Choi S."/>
            <person name="Ohtsubo E."/>
            <person name="Baba T."/>
            <person name="Wanner B.L."/>
            <person name="Mori H."/>
            <person name="Horiuchi T."/>
        </authorList>
    </citation>
    <scope>NUCLEOTIDE SEQUENCE [LARGE SCALE GENOMIC DNA]</scope>
    <source>
        <strain>K12 / W3110 / ATCC 27325 / DSM 5911</strain>
    </source>
</reference>
<reference key="5">
    <citation type="journal article" date="1987" name="J. Bacteriol.">
        <title>Structural analysis of the Escherichia coli K-12 hisT operon by using a kanamycin resistance cassette.</title>
        <authorList>
            <person name="Arps P.J."/>
            <person name="Winkler M.E."/>
        </authorList>
    </citation>
    <scope>NUCLEOTIDE SEQUENCE [GENOMIC DNA] OF 1-9</scope>
    <source>
        <strain>K12</strain>
    </source>
</reference>
<reference key="6">
    <citation type="journal article" date="1993" name="J. Bacteriol.">
        <title>Growth rate regulation of Escherichia coli acetyl coenzyme A carboxylase, which catalyzes the first committed step of lipid biosynthesis.</title>
        <authorList>
            <person name="Li S.-J."/>
            <person name="Cronan J.E. Jr."/>
        </authorList>
    </citation>
    <scope>NUCLEOTIDE SEQUENCE [GENOMIC DNA] OF 204-219</scope>
</reference>
<reference key="7">
    <citation type="journal article" date="2005" name="Science">
        <title>Global topology analysis of the Escherichia coli inner membrane proteome.</title>
        <authorList>
            <person name="Daley D.O."/>
            <person name="Rapp M."/>
            <person name="Granseth E."/>
            <person name="Melen K."/>
            <person name="Drew D."/>
            <person name="von Heijne G."/>
        </authorList>
    </citation>
    <scope>TOPOLOGY [LARGE SCALE ANALYSIS]</scope>
    <scope>SUBCELLULAR LOCATION</scope>
    <source>
        <strain>K12 / MG1655 / ATCC 47076</strain>
    </source>
</reference>
<reference key="8">
    <citation type="journal article" date="2023" name="Nature">
        <title>Two broadly conserved families of polyprenyl-phosphate transporters.</title>
        <authorList>
            <person name="Roney I.J."/>
            <person name="Rudner D.Z."/>
        </authorList>
    </citation>
    <scope>PRELIMINARY FUNCTION</scope>
</reference>
<gene>
    <name evidence="4" type="primary">dedA</name>
    <name type="ordered locus">b2317</name>
    <name type="ordered locus">JW2314</name>
</gene>
<evidence type="ECO:0000255" key="1"/>
<evidence type="ECO:0000269" key="2">
    <source>
    </source>
</evidence>
<evidence type="ECO:0000269" key="3">
    <source>
    </source>
</evidence>
<evidence type="ECO:0000303" key="4">
    <source>
    </source>
</evidence>
<evidence type="ECO:0000305" key="5"/>
<proteinExistence type="evidence at protein level"/>
<comment type="function">
    <text evidence="3">Could be involved in undecaprenyl phosphate (UndP) transport and recycling (PubMed:36450357). When expressed in B.subtilis uptA-ykoX double mutant, confers high-level resistance to the amphomycin derivative MX2401, which binds UndP in the outer leaflet of the cytoplasmic membrane and prevents its transport across the membrane and its recycling (PubMed:36450357).</text>
</comment>
<comment type="subcellular location">
    <subcellularLocation>
        <location evidence="2">Cell inner membrane</location>
        <topology evidence="1">Multi-pass membrane protein</topology>
    </subcellularLocation>
</comment>
<comment type="similarity">
    <text evidence="5">Belongs to the DedA family.</text>
</comment>
<name>DEDA_ECOLI</name>
<organism>
    <name type="scientific">Escherichia coli (strain K12)</name>
    <dbReference type="NCBI Taxonomy" id="83333"/>
    <lineage>
        <taxon>Bacteria</taxon>
        <taxon>Pseudomonadati</taxon>
        <taxon>Pseudomonadota</taxon>
        <taxon>Gammaproteobacteria</taxon>
        <taxon>Enterobacterales</taxon>
        <taxon>Enterobacteriaceae</taxon>
        <taxon>Escherichia</taxon>
    </lineage>
</organism>